<sequence>MRAPEFQSNTTTSTGCDVCLDPQKSFANLFKRTVILLSGPTGSGKTDVSLRLASMVDGEIISVDSMQVYRGMDIGTAKVSLEDRQRIPHYLIDICHVQELFNAVDFYYQAMHACQNILSRNKVPILVGGSGFYFHTFLSGPPGGPPADREFRDQLALYIQDHGLSFLYENLCQKDPEYARTITKNDKNKIVRALEIIHLTGRKVSEHSWSMEPQESREYNCRGWFLSPPKELLLDNIQLRCQKMLEDNLIGEVRGLLEQGIRENSSASKAIGYREWIEFIDQGSPEEAYEAVKQKFITNTCQYTKKQRTWFKRYPVFRELPTLGLTAETLAGKIAEDYFLHG</sequence>
<name>MIAA_CHLCV</name>
<keyword id="KW-0067">ATP-binding</keyword>
<keyword id="KW-0460">Magnesium</keyword>
<keyword id="KW-0547">Nucleotide-binding</keyword>
<keyword id="KW-0808">Transferase</keyword>
<keyword id="KW-0819">tRNA processing</keyword>
<evidence type="ECO:0000255" key="1">
    <source>
        <dbReference type="HAMAP-Rule" id="MF_00185"/>
    </source>
</evidence>
<protein>
    <recommendedName>
        <fullName evidence="1">tRNA dimethylallyltransferase</fullName>
        <ecNumber evidence="1">2.5.1.75</ecNumber>
    </recommendedName>
    <alternativeName>
        <fullName evidence="1">Dimethylallyl diphosphate:tRNA dimethylallyltransferase</fullName>
        <shortName evidence="1">DMAPP:tRNA dimethylallyltransferase</shortName>
        <shortName evidence="1">DMATase</shortName>
    </alternativeName>
    <alternativeName>
        <fullName evidence="1">Isopentenyl-diphosphate:tRNA isopentenyltransferase</fullName>
        <shortName evidence="1">IPP transferase</shortName>
        <shortName evidence="1">IPPT</shortName>
        <shortName evidence="1">IPTase</shortName>
    </alternativeName>
</protein>
<comment type="function">
    <text evidence="1">Catalyzes the transfer of a dimethylallyl group onto the adenine at position 37 in tRNAs that read codons beginning with uridine, leading to the formation of N6-(dimethylallyl)adenosine (i(6)A).</text>
</comment>
<comment type="catalytic activity">
    <reaction evidence="1">
        <text>adenosine(37) in tRNA + dimethylallyl diphosphate = N(6)-dimethylallyladenosine(37) in tRNA + diphosphate</text>
        <dbReference type="Rhea" id="RHEA:26482"/>
        <dbReference type="Rhea" id="RHEA-COMP:10162"/>
        <dbReference type="Rhea" id="RHEA-COMP:10375"/>
        <dbReference type="ChEBI" id="CHEBI:33019"/>
        <dbReference type="ChEBI" id="CHEBI:57623"/>
        <dbReference type="ChEBI" id="CHEBI:74411"/>
        <dbReference type="ChEBI" id="CHEBI:74415"/>
        <dbReference type="EC" id="2.5.1.75"/>
    </reaction>
</comment>
<comment type="cofactor">
    <cofactor evidence="1">
        <name>Mg(2+)</name>
        <dbReference type="ChEBI" id="CHEBI:18420"/>
    </cofactor>
</comment>
<comment type="subunit">
    <text evidence="1">Monomer.</text>
</comment>
<comment type="similarity">
    <text evidence="1">Belongs to the IPP transferase family.</text>
</comment>
<dbReference type="EC" id="2.5.1.75" evidence="1"/>
<dbReference type="EMBL" id="AE015925">
    <property type="protein sequence ID" value="AAP05599.1"/>
    <property type="molecule type" value="Genomic_DNA"/>
</dbReference>
<dbReference type="RefSeq" id="WP_011006813.1">
    <property type="nucleotide sequence ID" value="NC_003361.3"/>
</dbReference>
<dbReference type="SMR" id="Q820E1"/>
<dbReference type="STRING" id="227941.CCA_00858"/>
<dbReference type="KEGG" id="cca:CCA_00858"/>
<dbReference type="eggNOG" id="COG0324">
    <property type="taxonomic scope" value="Bacteria"/>
</dbReference>
<dbReference type="HOGENOM" id="CLU_032616_0_1_0"/>
<dbReference type="OrthoDB" id="9776390at2"/>
<dbReference type="Proteomes" id="UP000002193">
    <property type="component" value="Chromosome"/>
</dbReference>
<dbReference type="GO" id="GO:0005524">
    <property type="term" value="F:ATP binding"/>
    <property type="evidence" value="ECO:0007669"/>
    <property type="project" value="UniProtKB-UniRule"/>
</dbReference>
<dbReference type="GO" id="GO:0052381">
    <property type="term" value="F:tRNA dimethylallyltransferase activity"/>
    <property type="evidence" value="ECO:0007669"/>
    <property type="project" value="UniProtKB-UniRule"/>
</dbReference>
<dbReference type="GO" id="GO:0006400">
    <property type="term" value="P:tRNA modification"/>
    <property type="evidence" value="ECO:0007669"/>
    <property type="project" value="TreeGrafter"/>
</dbReference>
<dbReference type="Gene3D" id="1.10.20.140">
    <property type="match status" value="1"/>
</dbReference>
<dbReference type="Gene3D" id="3.40.50.300">
    <property type="entry name" value="P-loop containing nucleotide triphosphate hydrolases"/>
    <property type="match status" value="1"/>
</dbReference>
<dbReference type="HAMAP" id="MF_00185">
    <property type="entry name" value="IPP_trans"/>
    <property type="match status" value="1"/>
</dbReference>
<dbReference type="InterPro" id="IPR039657">
    <property type="entry name" value="Dimethylallyltransferase"/>
</dbReference>
<dbReference type="InterPro" id="IPR018022">
    <property type="entry name" value="IPT"/>
</dbReference>
<dbReference type="InterPro" id="IPR027417">
    <property type="entry name" value="P-loop_NTPase"/>
</dbReference>
<dbReference type="NCBIfam" id="TIGR00174">
    <property type="entry name" value="miaA"/>
    <property type="match status" value="1"/>
</dbReference>
<dbReference type="PANTHER" id="PTHR11088">
    <property type="entry name" value="TRNA DIMETHYLALLYLTRANSFERASE"/>
    <property type="match status" value="1"/>
</dbReference>
<dbReference type="PANTHER" id="PTHR11088:SF60">
    <property type="entry name" value="TRNA DIMETHYLALLYLTRANSFERASE"/>
    <property type="match status" value="1"/>
</dbReference>
<dbReference type="Pfam" id="PF01715">
    <property type="entry name" value="IPPT"/>
    <property type="match status" value="1"/>
</dbReference>
<dbReference type="SUPFAM" id="SSF52540">
    <property type="entry name" value="P-loop containing nucleoside triphosphate hydrolases"/>
    <property type="match status" value="2"/>
</dbReference>
<reference key="1">
    <citation type="journal article" date="2003" name="Nucleic Acids Res.">
        <title>Genome sequence of Chlamydophila caviae (Chlamydia psittaci GPIC): examining the role of niche-specific genes in the evolution of the Chlamydiaceae.</title>
        <authorList>
            <person name="Read T.D."/>
            <person name="Myers G.S.A."/>
            <person name="Brunham R.C."/>
            <person name="Nelson W.C."/>
            <person name="Paulsen I.T."/>
            <person name="Heidelberg J.F."/>
            <person name="Holtzapple E.K."/>
            <person name="Khouri H.M."/>
            <person name="Federova N.B."/>
            <person name="Carty H.A."/>
            <person name="Umayam L.A."/>
            <person name="Haft D.H."/>
            <person name="Peterson J.D."/>
            <person name="Beanan M.J."/>
            <person name="White O."/>
            <person name="Salzberg S.L."/>
            <person name="Hsia R.-C."/>
            <person name="McClarty G."/>
            <person name="Rank R.G."/>
            <person name="Bavoil P.M."/>
            <person name="Fraser C.M."/>
        </authorList>
    </citation>
    <scope>NUCLEOTIDE SEQUENCE [LARGE SCALE GENOMIC DNA]</scope>
    <source>
        <strain>ATCC VR-813 / DSM 19441 / 03DC25 / GPIC</strain>
    </source>
</reference>
<proteinExistence type="inferred from homology"/>
<gene>
    <name evidence="1" type="primary">miaA</name>
    <name type="ordered locus">CCA_00858</name>
</gene>
<organism>
    <name type="scientific">Chlamydia caviae (strain ATCC VR-813 / DSM 19441 / 03DC25 / GPIC)</name>
    <name type="common">Chlamydophila caviae</name>
    <dbReference type="NCBI Taxonomy" id="227941"/>
    <lineage>
        <taxon>Bacteria</taxon>
        <taxon>Pseudomonadati</taxon>
        <taxon>Chlamydiota</taxon>
        <taxon>Chlamydiia</taxon>
        <taxon>Chlamydiales</taxon>
        <taxon>Chlamydiaceae</taxon>
        <taxon>Chlamydia/Chlamydophila group</taxon>
        <taxon>Chlamydia</taxon>
    </lineage>
</organism>
<feature type="chain" id="PRO_0000163897" description="tRNA dimethylallyltransferase">
    <location>
        <begin position="1"/>
        <end position="342"/>
    </location>
</feature>
<feature type="region of interest" description="Interaction with substrate tRNA" evidence="1">
    <location>
        <begin position="64"/>
        <end position="67"/>
    </location>
</feature>
<feature type="binding site" evidence="1">
    <location>
        <begin position="39"/>
        <end position="46"/>
    </location>
    <ligand>
        <name>ATP</name>
        <dbReference type="ChEBI" id="CHEBI:30616"/>
    </ligand>
</feature>
<feature type="binding site" evidence="1">
    <location>
        <begin position="41"/>
        <end position="46"/>
    </location>
    <ligand>
        <name>substrate</name>
    </ligand>
</feature>
<feature type="site" description="Interaction with substrate tRNA" evidence="1">
    <location>
        <position position="130"/>
    </location>
</feature>
<feature type="site" description="Interaction with substrate tRNA" evidence="1">
    <location>
        <position position="152"/>
    </location>
</feature>
<accession>Q820E1</accession>